<reference key="1">
    <citation type="journal article" date="2008" name="BMC Plant Biol.">
        <title>Comparative chloroplast genomics and phylogenetics of Fagopyrum esculentum ssp. ancestrale - a wild ancestor of cultivated buckwheat.</title>
        <authorList>
            <person name="Logacheva M.D."/>
            <person name="Samigullin T.H."/>
            <person name="Dhingra A."/>
            <person name="Penin A.A."/>
        </authorList>
    </citation>
    <scope>NUCLEOTIDE SEQUENCE [LARGE SCALE GENOMIC DNA]</scope>
</reference>
<organism>
    <name type="scientific">Fagopyrum esculentum subsp. ancestrale</name>
    <name type="common">Wild buckwheat</name>
    <dbReference type="NCBI Taxonomy" id="180217"/>
    <lineage>
        <taxon>Eukaryota</taxon>
        <taxon>Viridiplantae</taxon>
        <taxon>Streptophyta</taxon>
        <taxon>Embryophyta</taxon>
        <taxon>Tracheophyta</taxon>
        <taxon>Spermatophyta</taxon>
        <taxon>Magnoliopsida</taxon>
        <taxon>eudicotyledons</taxon>
        <taxon>Gunneridae</taxon>
        <taxon>Pentapetalae</taxon>
        <taxon>Caryophyllales</taxon>
        <taxon>Polygonaceae</taxon>
        <taxon>Polygonoideae</taxon>
        <taxon>Fagopyreae</taxon>
        <taxon>Fagopyrum</taxon>
    </lineage>
</organism>
<geneLocation type="chloroplast"/>
<gene>
    <name evidence="1" type="primary">ndhH</name>
</gene>
<keyword id="KW-0150">Chloroplast</keyword>
<keyword id="KW-0472">Membrane</keyword>
<keyword id="KW-0520">NAD</keyword>
<keyword id="KW-0521">NADP</keyword>
<keyword id="KW-0934">Plastid</keyword>
<keyword id="KW-0618">Plastoquinone</keyword>
<keyword id="KW-0874">Quinone</keyword>
<keyword id="KW-0793">Thylakoid</keyword>
<keyword id="KW-1278">Translocase</keyword>
<keyword id="KW-0813">Transport</keyword>
<comment type="function">
    <text evidence="1">NDH shuttles electrons from NAD(P)H:plastoquinone, via FMN and iron-sulfur (Fe-S) centers, to quinones in the photosynthetic chain and possibly in a chloroplast respiratory chain. The immediate electron acceptor for the enzyme in this species is believed to be plastoquinone. Couples the redox reaction to proton translocation, and thus conserves the redox energy in a proton gradient.</text>
</comment>
<comment type="catalytic activity">
    <reaction evidence="1">
        <text>a plastoquinone + NADH + (n+1) H(+)(in) = a plastoquinol + NAD(+) + n H(+)(out)</text>
        <dbReference type="Rhea" id="RHEA:42608"/>
        <dbReference type="Rhea" id="RHEA-COMP:9561"/>
        <dbReference type="Rhea" id="RHEA-COMP:9562"/>
        <dbReference type="ChEBI" id="CHEBI:15378"/>
        <dbReference type="ChEBI" id="CHEBI:17757"/>
        <dbReference type="ChEBI" id="CHEBI:57540"/>
        <dbReference type="ChEBI" id="CHEBI:57945"/>
        <dbReference type="ChEBI" id="CHEBI:62192"/>
    </reaction>
</comment>
<comment type="catalytic activity">
    <reaction evidence="1">
        <text>a plastoquinone + NADPH + (n+1) H(+)(in) = a plastoquinol + NADP(+) + n H(+)(out)</text>
        <dbReference type="Rhea" id="RHEA:42612"/>
        <dbReference type="Rhea" id="RHEA-COMP:9561"/>
        <dbReference type="Rhea" id="RHEA-COMP:9562"/>
        <dbReference type="ChEBI" id="CHEBI:15378"/>
        <dbReference type="ChEBI" id="CHEBI:17757"/>
        <dbReference type="ChEBI" id="CHEBI:57783"/>
        <dbReference type="ChEBI" id="CHEBI:58349"/>
        <dbReference type="ChEBI" id="CHEBI:62192"/>
    </reaction>
</comment>
<comment type="subunit">
    <text evidence="1">NDH is composed of at least 16 different subunits, 5 of which are encoded in the nucleus.</text>
</comment>
<comment type="subcellular location">
    <subcellularLocation>
        <location evidence="1">Plastid</location>
        <location evidence="1">Chloroplast thylakoid membrane</location>
        <topology evidence="1">Peripheral membrane protein</topology>
        <orientation evidence="1">Stromal side</orientation>
    </subcellularLocation>
</comment>
<comment type="similarity">
    <text evidence="1">Belongs to the complex I 49 kDa subunit family.</text>
</comment>
<accession>B2XWJ7</accession>
<protein>
    <recommendedName>
        <fullName evidence="1">NAD(P)H-quinone oxidoreductase subunit H, chloroplastic</fullName>
        <ecNumber evidence="1">7.1.1.-</ecNumber>
    </recommendedName>
    <alternativeName>
        <fullName>NAD(P)H dehydrogenase subunit H</fullName>
    </alternativeName>
    <alternativeName>
        <fullName evidence="1">NADH-plastoquinone oxidoreductase 49 kDa subunit</fullName>
    </alternativeName>
    <alternativeName>
        <fullName evidence="1">NADH-plastoquinone oxidoreductase subunit H</fullName>
    </alternativeName>
</protein>
<dbReference type="EC" id="7.1.1.-" evidence="1"/>
<dbReference type="EMBL" id="EU254477">
    <property type="protein sequence ID" value="ABY79788.1"/>
    <property type="molecule type" value="Genomic_DNA"/>
</dbReference>
<dbReference type="RefSeq" id="YP_001936573.1">
    <property type="nucleotide sequence ID" value="NC_010776.1"/>
</dbReference>
<dbReference type="SMR" id="B2XWJ7"/>
<dbReference type="GeneID" id="6335982"/>
<dbReference type="GO" id="GO:0009535">
    <property type="term" value="C:chloroplast thylakoid membrane"/>
    <property type="evidence" value="ECO:0007669"/>
    <property type="project" value="UniProtKB-SubCell"/>
</dbReference>
<dbReference type="GO" id="GO:0051287">
    <property type="term" value="F:NAD binding"/>
    <property type="evidence" value="ECO:0007669"/>
    <property type="project" value="InterPro"/>
</dbReference>
<dbReference type="GO" id="GO:0016655">
    <property type="term" value="F:oxidoreductase activity, acting on NAD(P)H, quinone or similar compound as acceptor"/>
    <property type="evidence" value="ECO:0007669"/>
    <property type="project" value="UniProtKB-UniRule"/>
</dbReference>
<dbReference type="GO" id="GO:0048038">
    <property type="term" value="F:quinone binding"/>
    <property type="evidence" value="ECO:0007669"/>
    <property type="project" value="UniProtKB-KW"/>
</dbReference>
<dbReference type="GO" id="GO:0019684">
    <property type="term" value="P:photosynthesis, light reaction"/>
    <property type="evidence" value="ECO:0007669"/>
    <property type="project" value="UniProtKB-UniRule"/>
</dbReference>
<dbReference type="Gene3D" id="1.10.645.10">
    <property type="entry name" value="Cytochrome-c3 Hydrogenase, chain B"/>
    <property type="match status" value="1"/>
</dbReference>
<dbReference type="HAMAP" id="MF_01358">
    <property type="entry name" value="NDH1_NuoD"/>
    <property type="match status" value="1"/>
</dbReference>
<dbReference type="InterPro" id="IPR001135">
    <property type="entry name" value="NADH_Q_OxRdtase_suD"/>
</dbReference>
<dbReference type="InterPro" id="IPR014029">
    <property type="entry name" value="NADH_UbQ_OxRdtase_49kDa_CS"/>
</dbReference>
<dbReference type="InterPro" id="IPR022885">
    <property type="entry name" value="NDH1_su_D/H"/>
</dbReference>
<dbReference type="InterPro" id="IPR029014">
    <property type="entry name" value="NiFe-Hase_large"/>
</dbReference>
<dbReference type="NCBIfam" id="NF004739">
    <property type="entry name" value="PRK06075.1"/>
    <property type="match status" value="1"/>
</dbReference>
<dbReference type="NCBIfam" id="NF005649">
    <property type="entry name" value="PRK07415.1"/>
    <property type="match status" value="1"/>
</dbReference>
<dbReference type="PANTHER" id="PTHR11993:SF10">
    <property type="entry name" value="NADH DEHYDROGENASE [UBIQUINONE] IRON-SULFUR PROTEIN 2, MITOCHONDRIAL"/>
    <property type="match status" value="1"/>
</dbReference>
<dbReference type="PANTHER" id="PTHR11993">
    <property type="entry name" value="NADH-UBIQUINONE OXIDOREDUCTASE 49 KDA SUBUNIT"/>
    <property type="match status" value="1"/>
</dbReference>
<dbReference type="Pfam" id="PF00346">
    <property type="entry name" value="Complex1_49kDa"/>
    <property type="match status" value="1"/>
</dbReference>
<dbReference type="SUPFAM" id="SSF56762">
    <property type="entry name" value="HydB/Nqo4-like"/>
    <property type="match status" value="1"/>
</dbReference>
<dbReference type="PROSITE" id="PS00535">
    <property type="entry name" value="COMPLEX1_49K"/>
    <property type="match status" value="1"/>
</dbReference>
<evidence type="ECO:0000255" key="1">
    <source>
        <dbReference type="HAMAP-Rule" id="MF_01358"/>
    </source>
</evidence>
<name>NDHH_FAGEA</name>
<feature type="chain" id="PRO_0000357989" description="NAD(P)H-quinone oxidoreductase subunit H, chloroplastic">
    <location>
        <begin position="1"/>
        <end position="393"/>
    </location>
</feature>
<proteinExistence type="inferred from homology"/>
<sequence>MTGPITRKDLMIVNMGPQHPSMHGVLRLIVTLDGEDVIDCEPVLGYLHRGMEKIAENRTIIQYLPYVTRWDYLATMFTEAITINAPEQLGNIQVPKRASYIRVIMLELSRIASHLLWLGPFMADIGAQTPFFYIFRERELIYDLFEAATGMRMMHNFFRIGGIAADLPYGWIDKCLDFCEYFLPAIAEYQTLITRNPIFLERVEGVGIIGGEEAINWGLSGPMLRASGIQWDLRKIDHYESYEEFDWEVQWQKEGDSLARYLTRIGEMAESIKIIQQALEGIPGGPYENLEIRRCNKVRDPEWNNFEYRFISKRPSPTFELSQQELYVRVEAPKGELGIFLIGDRSAFPWRWKIRPPGFINLQILPQLVKRMKLADIMTILGSIDIIMGEIDR</sequence>